<organism>
    <name type="scientific">Corynebacterium kroppenstedtii (strain DSM 44385 / JCM 11950 / CIP 105744 / CCUG 35717)</name>
    <dbReference type="NCBI Taxonomy" id="645127"/>
    <lineage>
        <taxon>Bacteria</taxon>
        <taxon>Bacillati</taxon>
        <taxon>Actinomycetota</taxon>
        <taxon>Actinomycetes</taxon>
        <taxon>Mycobacteriales</taxon>
        <taxon>Corynebacteriaceae</taxon>
        <taxon>Corynebacterium</taxon>
    </lineage>
</organism>
<comment type="function">
    <text evidence="1">Key enzyme in the regulation of glycerol uptake and metabolism. Catalyzes the phosphorylation of glycerol to yield sn-glycerol 3-phosphate.</text>
</comment>
<comment type="catalytic activity">
    <reaction evidence="1">
        <text>glycerol + ATP = sn-glycerol 3-phosphate + ADP + H(+)</text>
        <dbReference type="Rhea" id="RHEA:21644"/>
        <dbReference type="ChEBI" id="CHEBI:15378"/>
        <dbReference type="ChEBI" id="CHEBI:17754"/>
        <dbReference type="ChEBI" id="CHEBI:30616"/>
        <dbReference type="ChEBI" id="CHEBI:57597"/>
        <dbReference type="ChEBI" id="CHEBI:456216"/>
        <dbReference type="EC" id="2.7.1.30"/>
    </reaction>
</comment>
<comment type="activity regulation">
    <text evidence="1">Inhibited by fructose 1,6-bisphosphate (FBP).</text>
</comment>
<comment type="pathway">
    <text evidence="1">Polyol metabolism; glycerol degradation via glycerol kinase pathway; sn-glycerol 3-phosphate from glycerol: step 1/1.</text>
</comment>
<comment type="similarity">
    <text evidence="1">Belongs to the FGGY kinase family.</text>
</comment>
<sequence length="512" mass="56721">MPEKYVAAIDQGTTSTRCILFRHDGSIATVAQFEHKQIFPKKGWVEHDANEIWNNTRRAVGEAMAELDISVNDVVSVGITNQRETTVVWDKNTGEPIYNAIVWQDTRTNDIAQRLAGDEGPDRWRKTTGVRLNSYPAGPKIMWILENVEGAREKAEKGDLLFGTIDTWLLWNLTGGVDGDNGNPALHVTDVTNASRTSLMDLKTLKWDEDLCKAMDIPQSMLPEIRPSIGDFRTVRARGSLAGVPIRGVLGDQQAAMFGQCCFGNGDAKNTYGTGLFMLLNTGAKPKWSDNGLITTVCYQIENQKPVYALEGSVAMGGSLVQWLRDNLQLIPNAPSVENMAKSVEDNGGVYFVPAFSGLFAPRWRPDARGAIVGLTRFANRNHLARAVLEATAYQTREVLDAMVTDSGVDINALKVDGGMVMNEFLMQFQSDIINTEVVRPKNIETTALGAAYAAGLSAGFWDSLNELKEQSTVDKVWKPKMGEDERKQLYSDWNRAVERTYNWEESTNEPS</sequence>
<reference key="1">
    <citation type="journal article" date="2008" name="J. Biotechnol.">
        <title>Ultrafast pyrosequencing of Corynebacterium kroppenstedtii DSM44385 revealed insights into the physiology of a lipophilic corynebacterium that lacks mycolic acids.</title>
        <authorList>
            <person name="Tauch A."/>
            <person name="Schneider J."/>
            <person name="Szczepanowski R."/>
            <person name="Tilker A."/>
            <person name="Viehoever P."/>
            <person name="Gartemann K.-H."/>
            <person name="Arnold W."/>
            <person name="Blom J."/>
            <person name="Brinkrolf K."/>
            <person name="Brune I."/>
            <person name="Goetker S."/>
            <person name="Weisshaar B."/>
            <person name="Goesmann A."/>
            <person name="Droege M."/>
            <person name="Puehler A."/>
        </authorList>
    </citation>
    <scope>NUCLEOTIDE SEQUENCE [LARGE SCALE GENOMIC DNA]</scope>
    <source>
        <strain>DSM 44385 / JCM 11950 / CIP 105744 / CCUG 35717</strain>
    </source>
</reference>
<accession>C4LGQ3</accession>
<gene>
    <name evidence="1" type="primary">glpK</name>
    <name type="ordered locus">ckrop_0216</name>
</gene>
<dbReference type="EC" id="2.7.1.30" evidence="1"/>
<dbReference type="EMBL" id="CP001620">
    <property type="protein sequence ID" value="ACR17008.1"/>
    <property type="molecule type" value="Genomic_DNA"/>
</dbReference>
<dbReference type="RefSeq" id="WP_012730896.1">
    <property type="nucleotide sequence ID" value="NC_012704.1"/>
</dbReference>
<dbReference type="SMR" id="C4LGQ3"/>
<dbReference type="STRING" id="645127.ckrop_0216"/>
<dbReference type="KEGG" id="ckp:ckrop_0216"/>
<dbReference type="eggNOG" id="COG0554">
    <property type="taxonomic scope" value="Bacteria"/>
</dbReference>
<dbReference type="HOGENOM" id="CLU_009281_2_3_11"/>
<dbReference type="OrthoDB" id="9805576at2"/>
<dbReference type="UniPathway" id="UPA00618">
    <property type="reaction ID" value="UER00672"/>
</dbReference>
<dbReference type="Proteomes" id="UP000001473">
    <property type="component" value="Chromosome"/>
</dbReference>
<dbReference type="GO" id="GO:0005829">
    <property type="term" value="C:cytosol"/>
    <property type="evidence" value="ECO:0007669"/>
    <property type="project" value="TreeGrafter"/>
</dbReference>
<dbReference type="GO" id="GO:0005524">
    <property type="term" value="F:ATP binding"/>
    <property type="evidence" value="ECO:0007669"/>
    <property type="project" value="UniProtKB-UniRule"/>
</dbReference>
<dbReference type="GO" id="GO:0004370">
    <property type="term" value="F:glycerol kinase activity"/>
    <property type="evidence" value="ECO:0000250"/>
    <property type="project" value="UniProtKB"/>
</dbReference>
<dbReference type="GO" id="GO:0019563">
    <property type="term" value="P:glycerol catabolic process"/>
    <property type="evidence" value="ECO:0007669"/>
    <property type="project" value="UniProtKB-UniRule"/>
</dbReference>
<dbReference type="GO" id="GO:0006071">
    <property type="term" value="P:glycerol metabolic process"/>
    <property type="evidence" value="ECO:0000250"/>
    <property type="project" value="UniProtKB"/>
</dbReference>
<dbReference type="GO" id="GO:0006072">
    <property type="term" value="P:glycerol-3-phosphate metabolic process"/>
    <property type="evidence" value="ECO:0007669"/>
    <property type="project" value="InterPro"/>
</dbReference>
<dbReference type="CDD" id="cd07769">
    <property type="entry name" value="ASKHA_NBD_FGGY_GK"/>
    <property type="match status" value="1"/>
</dbReference>
<dbReference type="FunFam" id="3.30.420.40:FF:000007">
    <property type="entry name" value="Glycerol kinase"/>
    <property type="match status" value="1"/>
</dbReference>
<dbReference type="FunFam" id="3.30.420.40:FF:000008">
    <property type="entry name" value="Glycerol kinase"/>
    <property type="match status" value="1"/>
</dbReference>
<dbReference type="Gene3D" id="3.30.420.40">
    <property type="match status" value="2"/>
</dbReference>
<dbReference type="HAMAP" id="MF_00186">
    <property type="entry name" value="Glycerol_kin"/>
    <property type="match status" value="1"/>
</dbReference>
<dbReference type="InterPro" id="IPR043129">
    <property type="entry name" value="ATPase_NBD"/>
</dbReference>
<dbReference type="InterPro" id="IPR000577">
    <property type="entry name" value="Carb_kinase_FGGY"/>
</dbReference>
<dbReference type="InterPro" id="IPR018483">
    <property type="entry name" value="Carb_kinase_FGGY_CS"/>
</dbReference>
<dbReference type="InterPro" id="IPR018485">
    <property type="entry name" value="FGGY_C"/>
</dbReference>
<dbReference type="InterPro" id="IPR018484">
    <property type="entry name" value="FGGY_N"/>
</dbReference>
<dbReference type="InterPro" id="IPR005999">
    <property type="entry name" value="Glycerol_kin"/>
</dbReference>
<dbReference type="NCBIfam" id="TIGR01311">
    <property type="entry name" value="glycerol_kin"/>
    <property type="match status" value="1"/>
</dbReference>
<dbReference type="NCBIfam" id="NF000756">
    <property type="entry name" value="PRK00047.1"/>
    <property type="match status" value="1"/>
</dbReference>
<dbReference type="PANTHER" id="PTHR10196:SF69">
    <property type="entry name" value="GLYCEROL KINASE"/>
    <property type="match status" value="1"/>
</dbReference>
<dbReference type="PANTHER" id="PTHR10196">
    <property type="entry name" value="SUGAR KINASE"/>
    <property type="match status" value="1"/>
</dbReference>
<dbReference type="Pfam" id="PF02782">
    <property type="entry name" value="FGGY_C"/>
    <property type="match status" value="1"/>
</dbReference>
<dbReference type="Pfam" id="PF00370">
    <property type="entry name" value="FGGY_N"/>
    <property type="match status" value="1"/>
</dbReference>
<dbReference type="PIRSF" id="PIRSF000538">
    <property type="entry name" value="GlpK"/>
    <property type="match status" value="1"/>
</dbReference>
<dbReference type="SUPFAM" id="SSF53067">
    <property type="entry name" value="Actin-like ATPase domain"/>
    <property type="match status" value="2"/>
</dbReference>
<dbReference type="PROSITE" id="PS00445">
    <property type="entry name" value="FGGY_KINASES_2"/>
    <property type="match status" value="1"/>
</dbReference>
<evidence type="ECO:0000255" key="1">
    <source>
        <dbReference type="HAMAP-Rule" id="MF_00186"/>
    </source>
</evidence>
<proteinExistence type="inferred from homology"/>
<name>GLPK_CORK4</name>
<keyword id="KW-0067">ATP-binding</keyword>
<keyword id="KW-0319">Glycerol metabolism</keyword>
<keyword id="KW-0418">Kinase</keyword>
<keyword id="KW-0547">Nucleotide-binding</keyword>
<keyword id="KW-1185">Reference proteome</keyword>
<keyword id="KW-0808">Transferase</keyword>
<feature type="chain" id="PRO_1000203948" description="Glycerol kinase">
    <location>
        <begin position="1"/>
        <end position="512"/>
    </location>
</feature>
<feature type="binding site" evidence="1">
    <location>
        <position position="13"/>
    </location>
    <ligand>
        <name>ADP</name>
        <dbReference type="ChEBI" id="CHEBI:456216"/>
    </ligand>
</feature>
<feature type="binding site" evidence="1">
    <location>
        <position position="13"/>
    </location>
    <ligand>
        <name>ATP</name>
        <dbReference type="ChEBI" id="CHEBI:30616"/>
    </ligand>
</feature>
<feature type="binding site" evidence="1">
    <location>
        <position position="13"/>
    </location>
    <ligand>
        <name>sn-glycerol 3-phosphate</name>
        <dbReference type="ChEBI" id="CHEBI:57597"/>
    </ligand>
</feature>
<feature type="binding site" evidence="1">
    <location>
        <position position="14"/>
    </location>
    <ligand>
        <name>ATP</name>
        <dbReference type="ChEBI" id="CHEBI:30616"/>
    </ligand>
</feature>
<feature type="binding site" evidence="1">
    <location>
        <position position="15"/>
    </location>
    <ligand>
        <name>ATP</name>
        <dbReference type="ChEBI" id="CHEBI:30616"/>
    </ligand>
</feature>
<feature type="binding site" evidence="1">
    <location>
        <position position="17"/>
    </location>
    <ligand>
        <name>ADP</name>
        <dbReference type="ChEBI" id="CHEBI:456216"/>
    </ligand>
</feature>
<feature type="binding site" evidence="1">
    <location>
        <position position="83"/>
    </location>
    <ligand>
        <name>glycerol</name>
        <dbReference type="ChEBI" id="CHEBI:17754"/>
    </ligand>
</feature>
<feature type="binding site" evidence="1">
    <location>
        <position position="83"/>
    </location>
    <ligand>
        <name>sn-glycerol 3-phosphate</name>
        <dbReference type="ChEBI" id="CHEBI:57597"/>
    </ligand>
</feature>
<feature type="binding site" evidence="1">
    <location>
        <position position="84"/>
    </location>
    <ligand>
        <name>glycerol</name>
        <dbReference type="ChEBI" id="CHEBI:17754"/>
    </ligand>
</feature>
<feature type="binding site" evidence="1">
    <location>
        <position position="84"/>
    </location>
    <ligand>
        <name>sn-glycerol 3-phosphate</name>
        <dbReference type="ChEBI" id="CHEBI:57597"/>
    </ligand>
</feature>
<feature type="binding site" evidence="1">
    <location>
        <position position="135"/>
    </location>
    <ligand>
        <name>glycerol</name>
        <dbReference type="ChEBI" id="CHEBI:17754"/>
    </ligand>
</feature>
<feature type="binding site" evidence="1">
    <location>
        <position position="135"/>
    </location>
    <ligand>
        <name>sn-glycerol 3-phosphate</name>
        <dbReference type="ChEBI" id="CHEBI:57597"/>
    </ligand>
</feature>
<feature type="binding site" evidence="1">
    <location>
        <position position="252"/>
    </location>
    <ligand>
        <name>glycerol</name>
        <dbReference type="ChEBI" id="CHEBI:17754"/>
    </ligand>
</feature>
<feature type="binding site" evidence="1">
    <location>
        <position position="252"/>
    </location>
    <ligand>
        <name>sn-glycerol 3-phosphate</name>
        <dbReference type="ChEBI" id="CHEBI:57597"/>
    </ligand>
</feature>
<feature type="binding site" evidence="1">
    <location>
        <position position="253"/>
    </location>
    <ligand>
        <name>glycerol</name>
        <dbReference type="ChEBI" id="CHEBI:17754"/>
    </ligand>
</feature>
<feature type="binding site" evidence="1">
    <location>
        <position position="274"/>
    </location>
    <ligand>
        <name>ADP</name>
        <dbReference type="ChEBI" id="CHEBI:456216"/>
    </ligand>
</feature>
<feature type="binding site" evidence="1">
    <location>
        <position position="274"/>
    </location>
    <ligand>
        <name>ATP</name>
        <dbReference type="ChEBI" id="CHEBI:30616"/>
    </ligand>
</feature>
<feature type="binding site" evidence="1">
    <location>
        <position position="318"/>
    </location>
    <ligand>
        <name>ADP</name>
        <dbReference type="ChEBI" id="CHEBI:456216"/>
    </ligand>
</feature>
<feature type="binding site" evidence="1">
    <location>
        <position position="318"/>
    </location>
    <ligand>
        <name>ATP</name>
        <dbReference type="ChEBI" id="CHEBI:30616"/>
    </ligand>
</feature>
<feature type="binding site" evidence="1">
    <location>
        <position position="322"/>
    </location>
    <ligand>
        <name>ATP</name>
        <dbReference type="ChEBI" id="CHEBI:30616"/>
    </ligand>
</feature>
<feature type="binding site" evidence="1">
    <location>
        <position position="419"/>
    </location>
    <ligand>
        <name>ADP</name>
        <dbReference type="ChEBI" id="CHEBI:456216"/>
    </ligand>
</feature>
<feature type="binding site" evidence="1">
    <location>
        <position position="419"/>
    </location>
    <ligand>
        <name>ATP</name>
        <dbReference type="ChEBI" id="CHEBI:30616"/>
    </ligand>
</feature>
<feature type="binding site" evidence="1">
    <location>
        <position position="423"/>
    </location>
    <ligand>
        <name>ADP</name>
        <dbReference type="ChEBI" id="CHEBI:456216"/>
    </ligand>
</feature>
<protein>
    <recommendedName>
        <fullName evidence="1">Glycerol kinase</fullName>
        <ecNumber evidence="1">2.7.1.30</ecNumber>
    </recommendedName>
    <alternativeName>
        <fullName evidence="1">ATP:glycerol 3-phosphotransferase</fullName>
    </alternativeName>
    <alternativeName>
        <fullName evidence="1">Glycerokinase</fullName>
        <shortName evidence="1">GK</shortName>
    </alternativeName>
</protein>